<gene>
    <name evidence="1" type="primary">rpl20</name>
</gene>
<feature type="chain" id="PRO_0000276410" description="Large ribosomal subunit protein bL20c">
    <location>
        <begin position="1"/>
        <end position="117"/>
    </location>
</feature>
<keyword id="KW-0150">Chloroplast</keyword>
<keyword id="KW-0934">Plastid</keyword>
<keyword id="KW-1185">Reference proteome</keyword>
<keyword id="KW-0687">Ribonucleoprotein</keyword>
<keyword id="KW-0689">Ribosomal protein</keyword>
<keyword id="KW-0694">RNA-binding</keyword>
<keyword id="KW-0699">rRNA-binding</keyword>
<dbReference type="EMBL" id="DQ345959">
    <property type="protein sequence ID" value="ABC73651.1"/>
    <property type="molecule type" value="Genomic_DNA"/>
</dbReference>
<dbReference type="RefSeq" id="YP_538958.1">
    <property type="nucleotide sequence ID" value="NC_007944.1"/>
</dbReference>
<dbReference type="SMR" id="Q2L927"/>
<dbReference type="GeneID" id="3989128"/>
<dbReference type="KEGG" id="ghi:3989128"/>
<dbReference type="OMA" id="IHETEVF"/>
<dbReference type="OrthoDB" id="69499at41938"/>
<dbReference type="Proteomes" id="UP000189702">
    <property type="component" value="Chloroplast Pltd"/>
</dbReference>
<dbReference type="GO" id="GO:0009507">
    <property type="term" value="C:chloroplast"/>
    <property type="evidence" value="ECO:0007669"/>
    <property type="project" value="UniProtKB-SubCell"/>
</dbReference>
<dbReference type="GO" id="GO:1990904">
    <property type="term" value="C:ribonucleoprotein complex"/>
    <property type="evidence" value="ECO:0007669"/>
    <property type="project" value="UniProtKB-KW"/>
</dbReference>
<dbReference type="GO" id="GO:0005840">
    <property type="term" value="C:ribosome"/>
    <property type="evidence" value="ECO:0007669"/>
    <property type="project" value="UniProtKB-KW"/>
</dbReference>
<dbReference type="GO" id="GO:0019843">
    <property type="term" value="F:rRNA binding"/>
    <property type="evidence" value="ECO:0007669"/>
    <property type="project" value="UniProtKB-UniRule"/>
</dbReference>
<dbReference type="GO" id="GO:0003735">
    <property type="term" value="F:structural constituent of ribosome"/>
    <property type="evidence" value="ECO:0000318"/>
    <property type="project" value="GO_Central"/>
</dbReference>
<dbReference type="GO" id="GO:0000027">
    <property type="term" value="P:ribosomal large subunit assembly"/>
    <property type="evidence" value="ECO:0007669"/>
    <property type="project" value="UniProtKB-UniRule"/>
</dbReference>
<dbReference type="GO" id="GO:0006412">
    <property type="term" value="P:translation"/>
    <property type="evidence" value="ECO:0007669"/>
    <property type="project" value="InterPro"/>
</dbReference>
<dbReference type="CDD" id="cd07026">
    <property type="entry name" value="Ribosomal_L20"/>
    <property type="match status" value="1"/>
</dbReference>
<dbReference type="FunFam" id="1.10.1900.20:FF:000002">
    <property type="entry name" value="50S ribosomal protein L20, chloroplastic"/>
    <property type="match status" value="1"/>
</dbReference>
<dbReference type="Gene3D" id="6.10.160.10">
    <property type="match status" value="1"/>
</dbReference>
<dbReference type="Gene3D" id="1.10.1900.20">
    <property type="entry name" value="Ribosomal protein L20"/>
    <property type="match status" value="1"/>
</dbReference>
<dbReference type="HAMAP" id="MF_00382">
    <property type="entry name" value="Ribosomal_bL20"/>
    <property type="match status" value="1"/>
</dbReference>
<dbReference type="InterPro" id="IPR005813">
    <property type="entry name" value="Ribosomal_bL20"/>
</dbReference>
<dbReference type="InterPro" id="IPR049946">
    <property type="entry name" value="RIBOSOMAL_L20_CS"/>
</dbReference>
<dbReference type="InterPro" id="IPR035566">
    <property type="entry name" value="Ribosomal_protein_bL20_C"/>
</dbReference>
<dbReference type="NCBIfam" id="TIGR01032">
    <property type="entry name" value="rplT_bact"/>
    <property type="match status" value="1"/>
</dbReference>
<dbReference type="PANTHER" id="PTHR10986">
    <property type="entry name" value="39S RIBOSOMAL PROTEIN L20"/>
    <property type="match status" value="1"/>
</dbReference>
<dbReference type="Pfam" id="PF00453">
    <property type="entry name" value="Ribosomal_L20"/>
    <property type="match status" value="1"/>
</dbReference>
<dbReference type="PRINTS" id="PR00062">
    <property type="entry name" value="RIBOSOMALL20"/>
</dbReference>
<dbReference type="SUPFAM" id="SSF74731">
    <property type="entry name" value="Ribosomal protein L20"/>
    <property type="match status" value="1"/>
</dbReference>
<dbReference type="PROSITE" id="PS00937">
    <property type="entry name" value="RIBOSOMAL_L20"/>
    <property type="match status" value="1"/>
</dbReference>
<organism>
    <name type="scientific">Gossypium hirsutum</name>
    <name type="common">Upland cotton</name>
    <name type="synonym">Gossypium mexicanum</name>
    <dbReference type="NCBI Taxonomy" id="3635"/>
    <lineage>
        <taxon>Eukaryota</taxon>
        <taxon>Viridiplantae</taxon>
        <taxon>Streptophyta</taxon>
        <taxon>Embryophyta</taxon>
        <taxon>Tracheophyta</taxon>
        <taxon>Spermatophyta</taxon>
        <taxon>Magnoliopsida</taxon>
        <taxon>eudicotyledons</taxon>
        <taxon>Gunneridae</taxon>
        <taxon>Pentapetalae</taxon>
        <taxon>rosids</taxon>
        <taxon>malvids</taxon>
        <taxon>Malvales</taxon>
        <taxon>Malvaceae</taxon>
        <taxon>Malvoideae</taxon>
        <taxon>Gossypium</taxon>
    </lineage>
</organism>
<reference key="1">
    <citation type="journal article" date="2006" name="BMC Genomics">
        <title>The complete chloroplast genome sequence of Gossypium hirsutum: organization and phylogenetic relationships to other angiosperms.</title>
        <authorList>
            <person name="Lee S.-B."/>
            <person name="Kaittanis C."/>
            <person name="Jansen R.K."/>
            <person name="Hostetler J.B."/>
            <person name="Tallon L.J."/>
            <person name="Town C.D."/>
            <person name="Daniell H."/>
        </authorList>
    </citation>
    <scope>NUCLEOTIDE SEQUENCE [LARGE SCALE GENOMIC DNA]</scope>
    <source>
        <strain>cv. Coker 310FR</strain>
    </source>
</reference>
<protein>
    <recommendedName>
        <fullName evidence="1">Large ribosomal subunit protein bL20c</fullName>
    </recommendedName>
    <alternativeName>
        <fullName evidence="2">50S ribosomal protein L20, chloroplastic</fullName>
    </alternativeName>
</protein>
<comment type="function">
    <text evidence="1">Binds directly to 23S ribosomal RNA and is necessary for the in vitro assembly process of the 50S ribosomal subunit. It is not involved in the protein synthesizing functions of that subunit.</text>
</comment>
<comment type="subcellular location">
    <subcellularLocation>
        <location>Plastid</location>
        <location>Chloroplast</location>
    </subcellularLocation>
</comment>
<comment type="similarity">
    <text evidence="1">Belongs to the bacterial ribosomal protein bL20 family.</text>
</comment>
<accession>Q2L927</accession>
<proteinExistence type="inferred from homology"/>
<geneLocation type="chloroplast"/>
<evidence type="ECO:0000255" key="1">
    <source>
        <dbReference type="HAMAP-Rule" id="MF_00382"/>
    </source>
</evidence>
<evidence type="ECO:0000305" key="2"/>
<name>RK20_GOSHI</name>
<sequence length="117" mass="14055">MTRIKRGYIARRRRKKISLFASSFRGAHSRLTRTITQQRIRALVSAHRDRDRKKRDFRRLWITRINAVIRGVGVSYSYSRLIHNLYKKQLLLNRKILAQIAISNRNCLYMISNEIRK</sequence>